<dbReference type="EC" id="3.2.2.-" evidence="2"/>
<dbReference type="EMBL" id="AE009441">
    <property type="protein sequence ID" value="AAL63408.1"/>
    <property type="molecule type" value="Genomic_DNA"/>
</dbReference>
<dbReference type="RefSeq" id="WP_011007881.1">
    <property type="nucleotide sequence ID" value="NC_003364.1"/>
</dbReference>
<dbReference type="SMR" id="Q8ZXE0"/>
<dbReference type="STRING" id="178306.PAE1327"/>
<dbReference type="EnsemblBacteria" id="AAL63408">
    <property type="protein sequence ID" value="AAL63408"/>
    <property type="gene ID" value="PAE1327"/>
</dbReference>
<dbReference type="GeneID" id="1465647"/>
<dbReference type="KEGG" id="pai:PAE1327"/>
<dbReference type="PATRIC" id="fig|178306.9.peg.981"/>
<dbReference type="eggNOG" id="arCOG00905">
    <property type="taxonomic scope" value="Archaea"/>
</dbReference>
<dbReference type="HOGENOM" id="CLU_083279_0_0_2"/>
<dbReference type="InParanoid" id="Q8ZXE0"/>
<dbReference type="BRENDA" id="3.2.2.27">
    <property type="organism ID" value="5239"/>
</dbReference>
<dbReference type="Proteomes" id="UP000002439">
    <property type="component" value="Chromosome"/>
</dbReference>
<dbReference type="GO" id="GO:0051539">
    <property type="term" value="F:4 iron, 4 sulfur cluster binding"/>
    <property type="evidence" value="ECO:0007669"/>
    <property type="project" value="UniProtKB-KW"/>
</dbReference>
<dbReference type="GO" id="GO:0097506">
    <property type="term" value="F:deaminated base DNA N-glycosylase activity"/>
    <property type="evidence" value="ECO:0000314"/>
    <property type="project" value="UniProtKB"/>
</dbReference>
<dbReference type="GO" id="GO:0033958">
    <property type="term" value="F:DNA-deoxyinosine glycosylase activity"/>
    <property type="evidence" value="ECO:0007669"/>
    <property type="project" value="InterPro"/>
</dbReference>
<dbReference type="GO" id="GO:0046872">
    <property type="term" value="F:metal ion binding"/>
    <property type="evidence" value="ECO:0007669"/>
    <property type="project" value="UniProtKB-KW"/>
</dbReference>
<dbReference type="GO" id="GO:0004844">
    <property type="term" value="F:uracil DNA N-glycosylase activity"/>
    <property type="evidence" value="ECO:0007669"/>
    <property type="project" value="InterPro"/>
</dbReference>
<dbReference type="GO" id="GO:0006284">
    <property type="term" value="P:base-excision repair"/>
    <property type="evidence" value="ECO:0007669"/>
    <property type="project" value="InterPro"/>
</dbReference>
<dbReference type="GO" id="GO:0006281">
    <property type="term" value="P:DNA repair"/>
    <property type="evidence" value="ECO:0000314"/>
    <property type="project" value="UniProtKB"/>
</dbReference>
<dbReference type="CDD" id="cd10031">
    <property type="entry name" value="UDG-F5_TTUDGB_like"/>
    <property type="match status" value="1"/>
</dbReference>
<dbReference type="Gene3D" id="3.40.470.10">
    <property type="entry name" value="Uracil-DNA glycosylase-like domain"/>
    <property type="match status" value="1"/>
</dbReference>
<dbReference type="InterPro" id="IPR051536">
    <property type="entry name" value="UDG_Type-4/5"/>
</dbReference>
<dbReference type="InterPro" id="IPR044147">
    <property type="entry name" value="UdgB-like"/>
</dbReference>
<dbReference type="InterPro" id="IPR005122">
    <property type="entry name" value="Uracil-DNA_glycosylase-like"/>
</dbReference>
<dbReference type="InterPro" id="IPR036895">
    <property type="entry name" value="Uracil-DNA_glycosylase-like_sf"/>
</dbReference>
<dbReference type="PANTHER" id="PTHR33693">
    <property type="entry name" value="TYPE-5 URACIL-DNA GLYCOSYLASE"/>
    <property type="match status" value="1"/>
</dbReference>
<dbReference type="PANTHER" id="PTHR33693:SF3">
    <property type="entry name" value="TYPE-5 URACIL-DNA GLYCOSYLASE"/>
    <property type="match status" value="1"/>
</dbReference>
<dbReference type="Pfam" id="PF03167">
    <property type="entry name" value="UDG"/>
    <property type="match status" value="1"/>
</dbReference>
<dbReference type="SMART" id="SM00986">
    <property type="entry name" value="UDG"/>
    <property type="match status" value="1"/>
</dbReference>
<dbReference type="SMART" id="SM00987">
    <property type="entry name" value="UreE_C"/>
    <property type="match status" value="1"/>
</dbReference>
<dbReference type="SUPFAM" id="SSF52141">
    <property type="entry name" value="Uracil-DNA glycosylase-like"/>
    <property type="match status" value="1"/>
</dbReference>
<organism>
    <name type="scientific">Pyrobaculum aerophilum (strain ATCC 51768 / DSM 7523 / JCM 9630 / CIP 104966 / NBRC 100827 / IM2)</name>
    <dbReference type="NCBI Taxonomy" id="178306"/>
    <lineage>
        <taxon>Archaea</taxon>
        <taxon>Thermoproteota</taxon>
        <taxon>Thermoprotei</taxon>
        <taxon>Thermoproteales</taxon>
        <taxon>Thermoproteaceae</taxon>
        <taxon>Pyrobaculum</taxon>
    </lineage>
</organism>
<gene>
    <name evidence="5" type="ordered locus">PAE1327</name>
</gene>
<sequence>MDLARVHTPRGWYDDFVNRLVNCARCPRLVSYRSTVKPLRRYESWSYWGRPVPPWGDLNARVMVVGLAPAAHGGNRTGRMFTGDASAQNLFKALFLLGLSNKPYSVSRDDGVEVRCVYITSAVKCAPPKNRPTAEEVYNCSSWLREELEAVRPRAVVALGELAWRAVLKILGATTAAFKHGEVVNAAGVRVYASYHPSPLNVNTGRLTVETLAEVLRRAAADAGCL</sequence>
<name>UDGB_PYRAE</name>
<reference key="1">
    <citation type="journal article" date="2002" name="Proc. Natl. Acad. Sci. U.S.A.">
        <title>Genome sequence of the hyperthermophilic crenarchaeon Pyrobaculum aerophilum.</title>
        <authorList>
            <person name="Fitz-Gibbon S.T."/>
            <person name="Ladner H."/>
            <person name="Kim U.-J."/>
            <person name="Stetter K.O."/>
            <person name="Simon M.I."/>
            <person name="Miller J.H."/>
        </authorList>
    </citation>
    <scope>NUCLEOTIDE SEQUENCE [LARGE SCALE GENOMIC DNA]</scope>
    <source>
        <strain>ATCC 51768 / DSM 7523 / JCM 9630 / CIP 104966 / NBRC 100827 / IM2</strain>
    </source>
</reference>
<reference key="2">
    <citation type="journal article" date="2002" name="EMBO J.">
        <title>A novel uracil-DNA glycosylase with broad substrate specificity and an unusual active site.</title>
        <authorList>
            <person name="Sartori A.A."/>
            <person name="Fitz-Gibbon S."/>
            <person name="Yang H."/>
            <person name="Miller J.H."/>
            <person name="Jiricny J."/>
        </authorList>
    </citation>
    <scope>FUNCTION</scope>
    <scope>CATALYTIC ACTIVITY</scope>
    <scope>BIOPHYSICOCHEMICAL PROPERTIES</scope>
    <scope>MUTAGENESIS OF ALA-68</scope>
</reference>
<keyword id="KW-0004">4Fe-4S</keyword>
<keyword id="KW-0227">DNA damage</keyword>
<keyword id="KW-0234">DNA repair</keyword>
<keyword id="KW-0378">Hydrolase</keyword>
<keyword id="KW-0408">Iron</keyword>
<keyword id="KW-0411">Iron-sulfur</keyword>
<keyword id="KW-0479">Metal-binding</keyword>
<keyword id="KW-1185">Reference proteome</keyword>
<feature type="chain" id="PRO_0000439188" description="Type-5 uracil-DNA glycosylase">
    <location>
        <begin position="1"/>
        <end position="226"/>
    </location>
</feature>
<feature type="binding site" evidence="1">
    <location>
        <position position="23"/>
    </location>
    <ligand>
        <name>[4Fe-4S] cluster</name>
        <dbReference type="ChEBI" id="CHEBI:49883"/>
    </ligand>
</feature>
<feature type="binding site" evidence="1">
    <location>
        <position position="26"/>
    </location>
    <ligand>
        <name>[4Fe-4S] cluster</name>
        <dbReference type="ChEBI" id="CHEBI:49883"/>
    </ligand>
</feature>
<feature type="binding site" evidence="1">
    <location>
        <position position="125"/>
    </location>
    <ligand>
        <name>[4Fe-4S] cluster</name>
        <dbReference type="ChEBI" id="CHEBI:49883"/>
    </ligand>
</feature>
<feature type="binding site" evidence="1">
    <location>
        <position position="140"/>
    </location>
    <ligand>
        <name>[4Fe-4S] cluster</name>
        <dbReference type="ChEBI" id="CHEBI:49883"/>
    </ligand>
</feature>
<feature type="mutagenesis site" description="10-fold decrease in activity." evidence="2">
    <original>A</original>
    <variation>D</variation>
    <location>
        <position position="68"/>
    </location>
</feature>
<accession>Q8ZXE0</accession>
<evidence type="ECO:0000250" key="1">
    <source>
        <dbReference type="UniProtKB" id="Q5SJ65"/>
    </source>
</evidence>
<evidence type="ECO:0000269" key="2">
    <source>
    </source>
</evidence>
<evidence type="ECO:0000303" key="3">
    <source>
    </source>
</evidence>
<evidence type="ECO:0000305" key="4"/>
<evidence type="ECO:0000312" key="5">
    <source>
        <dbReference type="EMBL" id="AAL63408.1"/>
    </source>
</evidence>
<protein>
    <recommendedName>
        <fullName evidence="4">Type-5 uracil-DNA glycosylase</fullName>
        <ecNumber evidence="2">3.2.2.-</ecNumber>
    </recommendedName>
    <alternativeName>
        <fullName evidence="3">Pa-UDGb</fullName>
    </alternativeName>
</protein>
<comment type="function">
    <text evidence="2">DNA glycosylase with broad substrate specificity. Can remove uracil from double-stranded DNA containing either a U/G or U/A base pair. Can also process hydroxymethyluracil (mispaired with guanine or adenine), hypoxanthine and fluorouracil. Exhibits a clear preference for double-stranded DNA substrates, but can also process uracil in single-stranded DNA, with lower efficiency.</text>
</comment>
<comment type="biophysicochemical properties">
    <temperatureDependence>
        <text evidence="2">Thermostable.</text>
    </temperatureDependence>
</comment>
<comment type="similarity">
    <text evidence="4">Belongs to the uracil-DNA glycosylase (UDG) superfamily. Type 5 (UDGb) family.</text>
</comment>
<proteinExistence type="evidence at protein level"/>